<feature type="chain" id="PRO_0000303328" description="tRNA N6-adenosine threonylcarbamoyltransferase">
    <location>
        <begin position="1"/>
        <end position="338"/>
    </location>
</feature>
<feature type="binding site" evidence="1">
    <location>
        <position position="114"/>
    </location>
    <ligand>
        <name>Fe cation</name>
        <dbReference type="ChEBI" id="CHEBI:24875"/>
    </ligand>
</feature>
<feature type="binding site" evidence="1">
    <location>
        <position position="118"/>
    </location>
    <ligand>
        <name>Fe cation</name>
        <dbReference type="ChEBI" id="CHEBI:24875"/>
    </ligand>
</feature>
<feature type="binding site" evidence="1">
    <location>
        <begin position="137"/>
        <end position="141"/>
    </location>
    <ligand>
        <name>substrate</name>
    </ligand>
</feature>
<feature type="binding site" evidence="1">
    <location>
        <position position="170"/>
    </location>
    <ligand>
        <name>substrate</name>
    </ligand>
</feature>
<feature type="binding site" evidence="1">
    <location>
        <position position="183"/>
    </location>
    <ligand>
        <name>substrate</name>
    </ligand>
</feature>
<feature type="binding site" evidence="1">
    <location>
        <position position="187"/>
    </location>
    <ligand>
        <name>substrate</name>
    </ligand>
</feature>
<feature type="binding site" evidence="1">
    <location>
        <position position="277"/>
    </location>
    <ligand>
        <name>substrate</name>
    </ligand>
</feature>
<feature type="binding site" evidence="1">
    <location>
        <position position="305"/>
    </location>
    <ligand>
        <name>Fe cation</name>
        <dbReference type="ChEBI" id="CHEBI:24875"/>
    </ligand>
</feature>
<proteinExistence type="inferred from homology"/>
<name>TSAD_CLOD6</name>
<protein>
    <recommendedName>
        <fullName evidence="1">tRNA N6-adenosine threonylcarbamoyltransferase</fullName>
        <ecNumber evidence="1">2.3.1.234</ecNumber>
    </recommendedName>
    <alternativeName>
        <fullName evidence="1">N6-L-threonylcarbamoyladenine synthase</fullName>
        <shortName evidence="1">t(6)A synthase</shortName>
    </alternativeName>
    <alternativeName>
        <fullName evidence="1">t(6)A37 threonylcarbamoyladenosine biosynthesis protein TsaD</fullName>
    </alternativeName>
    <alternativeName>
        <fullName evidence="1">tRNA threonylcarbamoyladenosine biosynthesis protein TsaD</fullName>
    </alternativeName>
</protein>
<evidence type="ECO:0000255" key="1">
    <source>
        <dbReference type="HAMAP-Rule" id="MF_01445"/>
    </source>
</evidence>
<comment type="function">
    <text evidence="1">Required for the formation of a threonylcarbamoyl group on adenosine at position 37 (t(6)A37) in tRNAs that read codons beginning with adenine. Is involved in the transfer of the threonylcarbamoyl moiety of threonylcarbamoyl-AMP (TC-AMP) to the N6 group of A37, together with TsaE and TsaB. TsaD likely plays a direct catalytic role in this reaction.</text>
</comment>
<comment type="catalytic activity">
    <reaction evidence="1">
        <text>L-threonylcarbamoyladenylate + adenosine(37) in tRNA = N(6)-L-threonylcarbamoyladenosine(37) in tRNA + AMP + H(+)</text>
        <dbReference type="Rhea" id="RHEA:37059"/>
        <dbReference type="Rhea" id="RHEA-COMP:10162"/>
        <dbReference type="Rhea" id="RHEA-COMP:10163"/>
        <dbReference type="ChEBI" id="CHEBI:15378"/>
        <dbReference type="ChEBI" id="CHEBI:73682"/>
        <dbReference type="ChEBI" id="CHEBI:74411"/>
        <dbReference type="ChEBI" id="CHEBI:74418"/>
        <dbReference type="ChEBI" id="CHEBI:456215"/>
        <dbReference type="EC" id="2.3.1.234"/>
    </reaction>
</comment>
<comment type="cofactor">
    <cofactor evidence="1">
        <name>Fe(2+)</name>
        <dbReference type="ChEBI" id="CHEBI:29033"/>
    </cofactor>
    <text evidence="1">Binds 1 Fe(2+) ion per subunit.</text>
</comment>
<comment type="subcellular location">
    <subcellularLocation>
        <location evidence="1">Cytoplasm</location>
    </subcellularLocation>
</comment>
<comment type="similarity">
    <text evidence="1">Belongs to the KAE1 / TsaD family.</text>
</comment>
<dbReference type="EC" id="2.3.1.234" evidence="1"/>
<dbReference type="EMBL" id="AM180355">
    <property type="protein sequence ID" value="CAJ66972.1"/>
    <property type="molecule type" value="Genomic_DNA"/>
</dbReference>
<dbReference type="RefSeq" id="WP_011860650.1">
    <property type="nucleotide sequence ID" value="NZ_JAUPES010000004.1"/>
</dbReference>
<dbReference type="RefSeq" id="YP_001086621.1">
    <property type="nucleotide sequence ID" value="NC_009089.1"/>
</dbReference>
<dbReference type="SMR" id="Q18CP0"/>
<dbReference type="STRING" id="272563.CD630_01520"/>
<dbReference type="EnsemblBacteria" id="CAJ66972">
    <property type="protein sequence ID" value="CAJ66972"/>
    <property type="gene ID" value="CD630_01520"/>
</dbReference>
<dbReference type="GeneID" id="66352699"/>
<dbReference type="KEGG" id="cdf:CD630_01520"/>
<dbReference type="KEGG" id="pdc:CDIF630_00271"/>
<dbReference type="PATRIC" id="fig|272563.120.peg.165"/>
<dbReference type="eggNOG" id="COG0533">
    <property type="taxonomic scope" value="Bacteria"/>
</dbReference>
<dbReference type="OrthoDB" id="9806197at2"/>
<dbReference type="PhylomeDB" id="Q18CP0"/>
<dbReference type="BioCyc" id="PDIF272563:G12WB-256-MONOMER"/>
<dbReference type="Proteomes" id="UP000001978">
    <property type="component" value="Chromosome"/>
</dbReference>
<dbReference type="GO" id="GO:0005737">
    <property type="term" value="C:cytoplasm"/>
    <property type="evidence" value="ECO:0007669"/>
    <property type="project" value="UniProtKB-SubCell"/>
</dbReference>
<dbReference type="GO" id="GO:0005506">
    <property type="term" value="F:iron ion binding"/>
    <property type="evidence" value="ECO:0007669"/>
    <property type="project" value="UniProtKB-UniRule"/>
</dbReference>
<dbReference type="GO" id="GO:0061711">
    <property type="term" value="F:N(6)-L-threonylcarbamoyladenine synthase activity"/>
    <property type="evidence" value="ECO:0007669"/>
    <property type="project" value="UniProtKB-EC"/>
</dbReference>
<dbReference type="GO" id="GO:0002949">
    <property type="term" value="P:tRNA threonylcarbamoyladenosine modification"/>
    <property type="evidence" value="ECO:0007669"/>
    <property type="project" value="UniProtKB-UniRule"/>
</dbReference>
<dbReference type="CDD" id="cd24133">
    <property type="entry name" value="ASKHA_NBD_TsaD_bac"/>
    <property type="match status" value="1"/>
</dbReference>
<dbReference type="FunFam" id="3.30.420.40:FF:000012">
    <property type="entry name" value="tRNA N6-adenosine threonylcarbamoyltransferase"/>
    <property type="match status" value="1"/>
</dbReference>
<dbReference type="FunFam" id="3.30.420.40:FF:000040">
    <property type="entry name" value="tRNA N6-adenosine threonylcarbamoyltransferase"/>
    <property type="match status" value="1"/>
</dbReference>
<dbReference type="Gene3D" id="3.30.420.40">
    <property type="match status" value="2"/>
</dbReference>
<dbReference type="HAMAP" id="MF_01445">
    <property type="entry name" value="TsaD"/>
    <property type="match status" value="1"/>
</dbReference>
<dbReference type="InterPro" id="IPR043129">
    <property type="entry name" value="ATPase_NBD"/>
</dbReference>
<dbReference type="InterPro" id="IPR000905">
    <property type="entry name" value="Gcp-like_dom"/>
</dbReference>
<dbReference type="InterPro" id="IPR017861">
    <property type="entry name" value="KAE1/TsaD"/>
</dbReference>
<dbReference type="InterPro" id="IPR017860">
    <property type="entry name" value="Peptidase_M22_CS"/>
</dbReference>
<dbReference type="InterPro" id="IPR022450">
    <property type="entry name" value="TsaD"/>
</dbReference>
<dbReference type="NCBIfam" id="TIGR00329">
    <property type="entry name" value="gcp_kae1"/>
    <property type="match status" value="1"/>
</dbReference>
<dbReference type="NCBIfam" id="TIGR03723">
    <property type="entry name" value="T6A_TsaD_YgjD"/>
    <property type="match status" value="1"/>
</dbReference>
<dbReference type="PANTHER" id="PTHR11735">
    <property type="entry name" value="TRNA N6-ADENOSINE THREONYLCARBAMOYLTRANSFERASE"/>
    <property type="match status" value="1"/>
</dbReference>
<dbReference type="PANTHER" id="PTHR11735:SF6">
    <property type="entry name" value="TRNA N6-ADENOSINE THREONYLCARBAMOYLTRANSFERASE, MITOCHONDRIAL"/>
    <property type="match status" value="1"/>
</dbReference>
<dbReference type="Pfam" id="PF00814">
    <property type="entry name" value="TsaD"/>
    <property type="match status" value="1"/>
</dbReference>
<dbReference type="PRINTS" id="PR00789">
    <property type="entry name" value="OSIALOPTASE"/>
</dbReference>
<dbReference type="SUPFAM" id="SSF53067">
    <property type="entry name" value="Actin-like ATPase domain"/>
    <property type="match status" value="2"/>
</dbReference>
<dbReference type="PROSITE" id="PS01016">
    <property type="entry name" value="GLYCOPROTEASE"/>
    <property type="match status" value="1"/>
</dbReference>
<keyword id="KW-0012">Acyltransferase</keyword>
<keyword id="KW-0963">Cytoplasm</keyword>
<keyword id="KW-0408">Iron</keyword>
<keyword id="KW-0479">Metal-binding</keyword>
<keyword id="KW-1185">Reference proteome</keyword>
<keyword id="KW-0808">Transferase</keyword>
<keyword id="KW-0819">tRNA processing</keyword>
<organism>
    <name type="scientific">Clostridioides difficile (strain 630)</name>
    <name type="common">Peptoclostridium difficile</name>
    <dbReference type="NCBI Taxonomy" id="272563"/>
    <lineage>
        <taxon>Bacteria</taxon>
        <taxon>Bacillati</taxon>
        <taxon>Bacillota</taxon>
        <taxon>Clostridia</taxon>
        <taxon>Peptostreptococcales</taxon>
        <taxon>Peptostreptococcaceae</taxon>
        <taxon>Clostridioides</taxon>
    </lineage>
</organism>
<sequence length="338" mass="36493">MSDIITLAIESSCDETAASVLKNGREVLSNIISTQIETHKKFGGVVPEVASRKHVENIDIVVQEALDKANIGFNDIDHIAVTYGPGLVGALLVGLSYAKALAYTLNIPLVGVNHIEGHLSANYIEHKDLKPPFITLIVSGGHTHLVEVKDYGKYEILGKTRDDASGEAFDKISRAMNLGYPGGPIIDNLAKNGNKHAIEFPRAYLEEDSYDFSFSGLKSSVLNYLNGKRMKNEEIVVEDVAASFQEAVVEVLSTKALKAVKDKGYNIITLSGGVASNSGLRAKITELAKDNGITVKYPPLILCTDNAAMIGCAGYYNFINGKTHDMSLNAVPNLKINQ</sequence>
<reference key="1">
    <citation type="journal article" date="2006" name="Nat. Genet.">
        <title>The multidrug-resistant human pathogen Clostridium difficile has a highly mobile, mosaic genome.</title>
        <authorList>
            <person name="Sebaihia M."/>
            <person name="Wren B.W."/>
            <person name="Mullany P."/>
            <person name="Fairweather N.F."/>
            <person name="Minton N."/>
            <person name="Stabler R."/>
            <person name="Thomson N.R."/>
            <person name="Roberts A.P."/>
            <person name="Cerdeno-Tarraga A.M."/>
            <person name="Wang H."/>
            <person name="Holden M.T.G."/>
            <person name="Wright A."/>
            <person name="Churcher C."/>
            <person name="Quail M.A."/>
            <person name="Baker S."/>
            <person name="Bason N."/>
            <person name="Brooks K."/>
            <person name="Chillingworth T."/>
            <person name="Cronin A."/>
            <person name="Davis P."/>
            <person name="Dowd L."/>
            <person name="Fraser A."/>
            <person name="Feltwell T."/>
            <person name="Hance Z."/>
            <person name="Holroyd S."/>
            <person name="Jagels K."/>
            <person name="Moule S."/>
            <person name="Mungall K."/>
            <person name="Price C."/>
            <person name="Rabbinowitsch E."/>
            <person name="Sharp S."/>
            <person name="Simmonds M."/>
            <person name="Stevens K."/>
            <person name="Unwin L."/>
            <person name="Whithead S."/>
            <person name="Dupuy B."/>
            <person name="Dougan G."/>
            <person name="Barrell B."/>
            <person name="Parkhill J."/>
        </authorList>
    </citation>
    <scope>NUCLEOTIDE SEQUENCE [LARGE SCALE GENOMIC DNA]</scope>
    <source>
        <strain>630</strain>
    </source>
</reference>
<accession>Q18CP0</accession>
<gene>
    <name evidence="1" type="primary">tsaD</name>
    <name type="synonym">gcp</name>
    <name type="ordered locus">CD630_01520</name>
</gene>